<comment type="function">
    <text evidence="1">ATPase subunit of a proteasome-like degradation complex; this subunit has chaperone activity. The binding of ATP and its subsequent hydrolysis by HslU are essential for unfolding of protein substrates subsequently hydrolyzed by HslV. HslU recognizes the N-terminal part of its protein substrates and unfolds these before they are guided to HslV for hydrolysis.</text>
</comment>
<comment type="subunit">
    <text evidence="1">A double ring-shaped homohexamer of HslV is capped on each side by a ring-shaped HslU homohexamer. The assembly of the HslU/HslV complex is dependent on binding of ATP.</text>
</comment>
<comment type="subcellular location">
    <subcellularLocation>
        <location evidence="1">Cytoplasm</location>
    </subcellularLocation>
</comment>
<comment type="similarity">
    <text evidence="1">Belongs to the ClpX chaperone family. HslU subfamily.</text>
</comment>
<evidence type="ECO:0000255" key="1">
    <source>
        <dbReference type="HAMAP-Rule" id="MF_00249"/>
    </source>
</evidence>
<keyword id="KW-0067">ATP-binding</keyword>
<keyword id="KW-0143">Chaperone</keyword>
<keyword id="KW-0963">Cytoplasm</keyword>
<keyword id="KW-0547">Nucleotide-binding</keyword>
<name>HSLU_BRUA1</name>
<protein>
    <recommendedName>
        <fullName evidence="1">ATP-dependent protease ATPase subunit HslU</fullName>
    </recommendedName>
    <alternativeName>
        <fullName evidence="1">Unfoldase HslU</fullName>
    </alternativeName>
</protein>
<dbReference type="EMBL" id="CP000887">
    <property type="protein sequence ID" value="ACD73430.1"/>
    <property type="molecule type" value="Genomic_DNA"/>
</dbReference>
<dbReference type="RefSeq" id="WP_002967032.1">
    <property type="nucleotide sequence ID" value="NC_010742.1"/>
</dbReference>
<dbReference type="SMR" id="B2S978"/>
<dbReference type="GeneID" id="93017610"/>
<dbReference type="KEGG" id="bmc:BAbS19_I19480"/>
<dbReference type="HOGENOM" id="CLU_033123_0_0_5"/>
<dbReference type="Proteomes" id="UP000002565">
    <property type="component" value="Chromosome 1"/>
</dbReference>
<dbReference type="GO" id="GO:0009376">
    <property type="term" value="C:HslUV protease complex"/>
    <property type="evidence" value="ECO:0007669"/>
    <property type="project" value="UniProtKB-UniRule"/>
</dbReference>
<dbReference type="GO" id="GO:0005524">
    <property type="term" value="F:ATP binding"/>
    <property type="evidence" value="ECO:0007669"/>
    <property type="project" value="UniProtKB-UniRule"/>
</dbReference>
<dbReference type="GO" id="GO:0016887">
    <property type="term" value="F:ATP hydrolysis activity"/>
    <property type="evidence" value="ECO:0007669"/>
    <property type="project" value="InterPro"/>
</dbReference>
<dbReference type="GO" id="GO:0008233">
    <property type="term" value="F:peptidase activity"/>
    <property type="evidence" value="ECO:0007669"/>
    <property type="project" value="InterPro"/>
</dbReference>
<dbReference type="GO" id="GO:0036402">
    <property type="term" value="F:proteasome-activating activity"/>
    <property type="evidence" value="ECO:0007669"/>
    <property type="project" value="UniProtKB-UniRule"/>
</dbReference>
<dbReference type="GO" id="GO:0043335">
    <property type="term" value="P:protein unfolding"/>
    <property type="evidence" value="ECO:0007669"/>
    <property type="project" value="UniProtKB-UniRule"/>
</dbReference>
<dbReference type="GO" id="GO:0051603">
    <property type="term" value="P:proteolysis involved in protein catabolic process"/>
    <property type="evidence" value="ECO:0007669"/>
    <property type="project" value="TreeGrafter"/>
</dbReference>
<dbReference type="CDD" id="cd19498">
    <property type="entry name" value="RecA-like_HslU"/>
    <property type="match status" value="1"/>
</dbReference>
<dbReference type="FunFam" id="3.40.50.300:FF:000213">
    <property type="entry name" value="ATP-dependent protease ATPase subunit HslU"/>
    <property type="match status" value="1"/>
</dbReference>
<dbReference type="FunFam" id="3.40.50.300:FF:000220">
    <property type="entry name" value="ATP-dependent protease ATPase subunit HslU"/>
    <property type="match status" value="1"/>
</dbReference>
<dbReference type="Gene3D" id="1.10.8.60">
    <property type="match status" value="1"/>
</dbReference>
<dbReference type="Gene3D" id="1.10.8.10">
    <property type="entry name" value="DNA helicase RuvA subunit, C-terminal domain"/>
    <property type="match status" value="1"/>
</dbReference>
<dbReference type="Gene3D" id="3.40.50.300">
    <property type="entry name" value="P-loop containing nucleotide triphosphate hydrolases"/>
    <property type="match status" value="1"/>
</dbReference>
<dbReference type="HAMAP" id="MF_00249">
    <property type="entry name" value="HslU"/>
    <property type="match status" value="1"/>
</dbReference>
<dbReference type="InterPro" id="IPR003593">
    <property type="entry name" value="AAA+_ATPase"/>
</dbReference>
<dbReference type="InterPro" id="IPR050052">
    <property type="entry name" value="ATP-dep_Clp_protease_ClpX"/>
</dbReference>
<dbReference type="InterPro" id="IPR003959">
    <property type="entry name" value="ATPase_AAA_core"/>
</dbReference>
<dbReference type="InterPro" id="IPR019489">
    <property type="entry name" value="Clp_ATPase_C"/>
</dbReference>
<dbReference type="InterPro" id="IPR004491">
    <property type="entry name" value="HslU"/>
</dbReference>
<dbReference type="InterPro" id="IPR027417">
    <property type="entry name" value="P-loop_NTPase"/>
</dbReference>
<dbReference type="NCBIfam" id="TIGR00390">
    <property type="entry name" value="hslU"/>
    <property type="match status" value="1"/>
</dbReference>
<dbReference type="NCBIfam" id="NF003544">
    <property type="entry name" value="PRK05201.1"/>
    <property type="match status" value="1"/>
</dbReference>
<dbReference type="PANTHER" id="PTHR48102">
    <property type="entry name" value="ATP-DEPENDENT CLP PROTEASE ATP-BINDING SUBUNIT CLPX-LIKE, MITOCHONDRIAL-RELATED"/>
    <property type="match status" value="1"/>
</dbReference>
<dbReference type="PANTHER" id="PTHR48102:SF3">
    <property type="entry name" value="ATP-DEPENDENT PROTEASE ATPASE SUBUNIT HSLU"/>
    <property type="match status" value="1"/>
</dbReference>
<dbReference type="Pfam" id="PF00004">
    <property type="entry name" value="AAA"/>
    <property type="match status" value="1"/>
</dbReference>
<dbReference type="Pfam" id="PF07724">
    <property type="entry name" value="AAA_2"/>
    <property type="match status" value="1"/>
</dbReference>
<dbReference type="Pfam" id="PF10431">
    <property type="entry name" value="ClpB_D2-small"/>
    <property type="match status" value="1"/>
</dbReference>
<dbReference type="SMART" id="SM00382">
    <property type="entry name" value="AAA"/>
    <property type="match status" value="1"/>
</dbReference>
<dbReference type="SMART" id="SM01086">
    <property type="entry name" value="ClpB_D2-small"/>
    <property type="match status" value="1"/>
</dbReference>
<dbReference type="SUPFAM" id="SSF52540">
    <property type="entry name" value="P-loop containing nucleoside triphosphate hydrolases"/>
    <property type="match status" value="1"/>
</dbReference>
<reference key="1">
    <citation type="journal article" date="2008" name="PLoS ONE">
        <title>Genome sequence of Brucella abortus vaccine strain S19 compared to virulent strains yields candidate virulence genes.</title>
        <authorList>
            <person name="Crasta O.R."/>
            <person name="Folkerts O."/>
            <person name="Fei Z."/>
            <person name="Mane S.P."/>
            <person name="Evans C."/>
            <person name="Martino-Catt S."/>
            <person name="Bricker B."/>
            <person name="Yu G."/>
            <person name="Du L."/>
            <person name="Sobral B.W."/>
        </authorList>
    </citation>
    <scope>NUCLEOTIDE SEQUENCE [LARGE SCALE GENOMIC DNA]</scope>
    <source>
        <strain>S19</strain>
    </source>
</reference>
<feature type="chain" id="PRO_1000100937" description="ATP-dependent protease ATPase subunit HslU">
    <location>
        <begin position="1"/>
        <end position="434"/>
    </location>
</feature>
<feature type="binding site" evidence="1">
    <location>
        <position position="18"/>
    </location>
    <ligand>
        <name>ATP</name>
        <dbReference type="ChEBI" id="CHEBI:30616"/>
    </ligand>
</feature>
<feature type="binding site" evidence="1">
    <location>
        <begin position="60"/>
        <end position="65"/>
    </location>
    <ligand>
        <name>ATP</name>
        <dbReference type="ChEBI" id="CHEBI:30616"/>
    </ligand>
</feature>
<feature type="binding site" evidence="1">
    <location>
        <position position="247"/>
    </location>
    <ligand>
        <name>ATP</name>
        <dbReference type="ChEBI" id="CHEBI:30616"/>
    </ligand>
</feature>
<feature type="binding site" evidence="1">
    <location>
        <position position="312"/>
    </location>
    <ligand>
        <name>ATP</name>
        <dbReference type="ChEBI" id="CHEBI:30616"/>
    </ligand>
</feature>
<feature type="binding site" evidence="1">
    <location>
        <position position="384"/>
    </location>
    <ligand>
        <name>ATP</name>
        <dbReference type="ChEBI" id="CHEBI:30616"/>
    </ligand>
</feature>
<organism>
    <name type="scientific">Brucella abortus (strain S19)</name>
    <dbReference type="NCBI Taxonomy" id="430066"/>
    <lineage>
        <taxon>Bacteria</taxon>
        <taxon>Pseudomonadati</taxon>
        <taxon>Pseudomonadota</taxon>
        <taxon>Alphaproteobacteria</taxon>
        <taxon>Hyphomicrobiales</taxon>
        <taxon>Brucellaceae</taxon>
        <taxon>Brucella/Ochrobactrum group</taxon>
        <taxon>Brucella</taxon>
    </lineage>
</organism>
<proteinExistence type="inferred from homology"/>
<sequence length="434" mass="47939">MSNFSPREIVSELDRFIIGQKDAKRAVAIALRNRWRRQQLEGQMREEVMPKNILMIGPTGVGKTEISRRLAKLAGAPFVKVEATKFTEVGYVGRDVEQIIRDLVEIAITLVREKRREDVKAKAHLNAEERVLDALVGKTASPATRDSFRKKLRNGEMDDKEIEIEVSDSGASPNFEIPGMPGANIGVLNISDMLGKAMGGRTKTRKTTVKDSYPILINDESDKLLDQDQIVQEALRVSEDEGIVFIDEIDKIAAREGGSGAGVSREGVQRDLLPLVEGTTVATKYGPVKTDHILFITSGAFHVSKPSDLLPELQGRLPIRVELSALTREDFRRILTETEASLIKQYIALMETEEVKLEFSDDAIDALADIAVDLNATVENIGARRLQTVIEKVLDEISFTAPDKAGATFIIDAAYVKEKIGGLAKNTDLSRFIL</sequence>
<accession>B2S978</accession>
<gene>
    <name evidence="1" type="primary">hslU</name>
    <name type="ordered locus">BAbS19_I19480</name>
</gene>